<proteinExistence type="inferred from homology"/>
<keyword id="KW-0963">Cytoplasm</keyword>
<keyword id="KW-0489">Methyltransferase</keyword>
<keyword id="KW-1185">Reference proteome</keyword>
<keyword id="KW-0694">RNA-binding</keyword>
<keyword id="KW-0698">rRNA processing</keyword>
<keyword id="KW-0949">S-adenosyl-L-methionine</keyword>
<keyword id="KW-0808">Transferase</keyword>
<organism>
    <name type="scientific">Bacteroides thetaiotaomicron (strain ATCC 29148 / DSM 2079 / JCM 5827 / CCUG 10774 / NCTC 10582 / VPI-5482 / E50)</name>
    <dbReference type="NCBI Taxonomy" id="226186"/>
    <lineage>
        <taxon>Bacteria</taxon>
        <taxon>Pseudomonadati</taxon>
        <taxon>Bacteroidota</taxon>
        <taxon>Bacteroidia</taxon>
        <taxon>Bacteroidales</taxon>
        <taxon>Bacteroidaceae</taxon>
        <taxon>Bacteroides</taxon>
    </lineage>
</organism>
<sequence length="267" mass="30363">MKLVKPKKFLGQHFLKDLKVAQDIADTVDTFPELPVLEVGPGMGVLTQFLVKKDRLVKVVEVDYESVAYLREAYPSLEDHIIEDDFLKMNLHRLFDGKPFVLTGNYPYNISSQIFFKMLENKDIIPCCTGMIQKEVAERIAAGPGSKTYGILSVLIQAWYKVEYLFTVSEHVFNPPPKVKSAVIRMTRNDTKELGCDEKLFKQVVKTTFNQRRKTLRNSIKPILGKDCPLTEDALFNKRPEQLSVEEFISLTNQVEEALKTATASGN</sequence>
<comment type="function">
    <text evidence="1">Specifically dimethylates two adjacent adenosines (A1518 and A1519) in the loop of a conserved hairpin near the 3'-end of 16S rRNA in the 30S particle. May play a critical role in biogenesis of 30S subunits.</text>
</comment>
<comment type="catalytic activity">
    <reaction evidence="1">
        <text>adenosine(1518)/adenosine(1519) in 16S rRNA + 4 S-adenosyl-L-methionine = N(6)-dimethyladenosine(1518)/N(6)-dimethyladenosine(1519) in 16S rRNA + 4 S-adenosyl-L-homocysteine + 4 H(+)</text>
        <dbReference type="Rhea" id="RHEA:19609"/>
        <dbReference type="Rhea" id="RHEA-COMP:10232"/>
        <dbReference type="Rhea" id="RHEA-COMP:10233"/>
        <dbReference type="ChEBI" id="CHEBI:15378"/>
        <dbReference type="ChEBI" id="CHEBI:57856"/>
        <dbReference type="ChEBI" id="CHEBI:59789"/>
        <dbReference type="ChEBI" id="CHEBI:74411"/>
        <dbReference type="ChEBI" id="CHEBI:74493"/>
        <dbReference type="EC" id="2.1.1.182"/>
    </reaction>
</comment>
<comment type="subcellular location">
    <subcellularLocation>
        <location evidence="1">Cytoplasm</location>
    </subcellularLocation>
</comment>
<comment type="similarity">
    <text evidence="1">Belongs to the class I-like SAM-binding methyltransferase superfamily. rRNA adenine N(6)-methyltransferase family. RsmA subfamily.</text>
</comment>
<dbReference type="EC" id="2.1.1.182" evidence="1"/>
<dbReference type="EMBL" id="AE015928">
    <property type="protein sequence ID" value="AAO79148.1"/>
    <property type="molecule type" value="Genomic_DNA"/>
</dbReference>
<dbReference type="RefSeq" id="NP_812954.1">
    <property type="nucleotide sequence ID" value="NC_004663.1"/>
</dbReference>
<dbReference type="RefSeq" id="WP_008760928.1">
    <property type="nucleotide sequence ID" value="NZ_UYXG01000005.1"/>
</dbReference>
<dbReference type="SMR" id="Q8A0H8"/>
<dbReference type="FunCoup" id="Q8A0H8">
    <property type="interactions" value="483"/>
</dbReference>
<dbReference type="STRING" id="226186.BT_4043"/>
<dbReference type="PaxDb" id="226186-BT_4043"/>
<dbReference type="DNASU" id="1073424"/>
<dbReference type="EnsemblBacteria" id="AAO79148">
    <property type="protein sequence ID" value="AAO79148"/>
    <property type="gene ID" value="BT_4043"/>
</dbReference>
<dbReference type="GeneID" id="60925217"/>
<dbReference type="KEGG" id="bth:BT_4043"/>
<dbReference type="PATRIC" id="fig|226186.12.peg.4105"/>
<dbReference type="eggNOG" id="COG0030">
    <property type="taxonomic scope" value="Bacteria"/>
</dbReference>
<dbReference type="HOGENOM" id="CLU_041220_0_1_10"/>
<dbReference type="InParanoid" id="Q8A0H8"/>
<dbReference type="OrthoDB" id="9814755at2"/>
<dbReference type="Proteomes" id="UP000001414">
    <property type="component" value="Chromosome"/>
</dbReference>
<dbReference type="GO" id="GO:0005829">
    <property type="term" value="C:cytosol"/>
    <property type="evidence" value="ECO:0000318"/>
    <property type="project" value="GO_Central"/>
</dbReference>
<dbReference type="GO" id="GO:0052908">
    <property type="term" value="F:16S rRNA (adenine(1518)-N(6)/adenine(1519)-N(6))-dimethyltransferase activity"/>
    <property type="evidence" value="ECO:0007669"/>
    <property type="project" value="UniProtKB-EC"/>
</dbReference>
<dbReference type="GO" id="GO:0003723">
    <property type="term" value="F:RNA binding"/>
    <property type="evidence" value="ECO:0007669"/>
    <property type="project" value="UniProtKB-KW"/>
</dbReference>
<dbReference type="GO" id="GO:0000179">
    <property type="term" value="F:rRNA (adenine-N6,N6-)-dimethyltransferase activity"/>
    <property type="evidence" value="ECO:0000318"/>
    <property type="project" value="GO_Central"/>
</dbReference>
<dbReference type="GO" id="GO:0031167">
    <property type="term" value="P:rRNA methylation"/>
    <property type="evidence" value="ECO:0000318"/>
    <property type="project" value="GO_Central"/>
</dbReference>
<dbReference type="FunFam" id="1.10.8.100:FF:000001">
    <property type="entry name" value="Ribosomal RNA small subunit methyltransferase A"/>
    <property type="match status" value="1"/>
</dbReference>
<dbReference type="FunFam" id="3.40.50.150:FF:000157">
    <property type="entry name" value="Ribosomal RNA small subunit methyltransferase A"/>
    <property type="match status" value="1"/>
</dbReference>
<dbReference type="Gene3D" id="1.10.8.100">
    <property type="entry name" value="Ribosomal RNA adenine dimethylase-like, domain 2"/>
    <property type="match status" value="1"/>
</dbReference>
<dbReference type="Gene3D" id="3.40.50.150">
    <property type="entry name" value="Vaccinia Virus protein VP39"/>
    <property type="match status" value="1"/>
</dbReference>
<dbReference type="HAMAP" id="MF_00607">
    <property type="entry name" value="16SrRNA_methyltr_A"/>
    <property type="match status" value="1"/>
</dbReference>
<dbReference type="InterPro" id="IPR001737">
    <property type="entry name" value="KsgA/Erm"/>
</dbReference>
<dbReference type="InterPro" id="IPR023165">
    <property type="entry name" value="rRNA_Ade_diMease-like_C"/>
</dbReference>
<dbReference type="InterPro" id="IPR020596">
    <property type="entry name" value="rRNA_Ade_Mease_Trfase_CS"/>
</dbReference>
<dbReference type="InterPro" id="IPR020598">
    <property type="entry name" value="rRNA_Ade_methylase_Trfase_N"/>
</dbReference>
<dbReference type="InterPro" id="IPR011530">
    <property type="entry name" value="rRNA_adenine_dimethylase"/>
</dbReference>
<dbReference type="InterPro" id="IPR029063">
    <property type="entry name" value="SAM-dependent_MTases_sf"/>
</dbReference>
<dbReference type="NCBIfam" id="TIGR00755">
    <property type="entry name" value="ksgA"/>
    <property type="match status" value="1"/>
</dbReference>
<dbReference type="PANTHER" id="PTHR11727">
    <property type="entry name" value="DIMETHYLADENOSINE TRANSFERASE"/>
    <property type="match status" value="1"/>
</dbReference>
<dbReference type="PANTHER" id="PTHR11727:SF7">
    <property type="entry name" value="DIMETHYLADENOSINE TRANSFERASE-RELATED"/>
    <property type="match status" value="1"/>
</dbReference>
<dbReference type="Pfam" id="PF00398">
    <property type="entry name" value="RrnaAD"/>
    <property type="match status" value="1"/>
</dbReference>
<dbReference type="SMART" id="SM00650">
    <property type="entry name" value="rADc"/>
    <property type="match status" value="1"/>
</dbReference>
<dbReference type="SUPFAM" id="SSF53335">
    <property type="entry name" value="S-adenosyl-L-methionine-dependent methyltransferases"/>
    <property type="match status" value="1"/>
</dbReference>
<dbReference type="PROSITE" id="PS01131">
    <property type="entry name" value="RRNA_A_DIMETH"/>
    <property type="match status" value="1"/>
</dbReference>
<dbReference type="PROSITE" id="PS51689">
    <property type="entry name" value="SAM_RNA_A_N6_MT"/>
    <property type="match status" value="1"/>
</dbReference>
<evidence type="ECO:0000255" key="1">
    <source>
        <dbReference type="HAMAP-Rule" id="MF_00607"/>
    </source>
</evidence>
<reference key="1">
    <citation type="journal article" date="2003" name="Science">
        <title>A genomic view of the human-Bacteroides thetaiotaomicron symbiosis.</title>
        <authorList>
            <person name="Xu J."/>
            <person name="Bjursell M.K."/>
            <person name="Himrod J."/>
            <person name="Deng S."/>
            <person name="Carmichael L.K."/>
            <person name="Chiang H.C."/>
            <person name="Hooper L.V."/>
            <person name="Gordon J.I."/>
        </authorList>
    </citation>
    <scope>NUCLEOTIDE SEQUENCE [LARGE SCALE GENOMIC DNA]</scope>
    <source>
        <strain>ATCC 29148 / DSM 2079 / JCM 5827 / CCUG 10774 / NCTC 10582 / VPI-5482 / E50</strain>
    </source>
</reference>
<gene>
    <name evidence="1" type="primary">rsmA</name>
    <name evidence="1" type="synonym">ksgA</name>
    <name type="ordered locus">BT_4043</name>
</gene>
<feature type="chain" id="PRO_0000101486" description="Ribosomal RNA small subunit methyltransferase A">
    <location>
        <begin position="1"/>
        <end position="267"/>
    </location>
</feature>
<feature type="binding site" evidence="1">
    <location>
        <position position="13"/>
    </location>
    <ligand>
        <name>S-adenosyl-L-methionine</name>
        <dbReference type="ChEBI" id="CHEBI:59789"/>
    </ligand>
</feature>
<feature type="binding site" evidence="1">
    <location>
        <position position="15"/>
    </location>
    <ligand>
        <name>S-adenosyl-L-methionine</name>
        <dbReference type="ChEBI" id="CHEBI:59789"/>
    </ligand>
</feature>
<feature type="binding site" evidence="1">
    <location>
        <position position="40"/>
    </location>
    <ligand>
        <name>S-adenosyl-L-methionine</name>
        <dbReference type="ChEBI" id="CHEBI:59789"/>
    </ligand>
</feature>
<feature type="binding site" evidence="1">
    <location>
        <position position="61"/>
    </location>
    <ligand>
        <name>S-adenosyl-L-methionine</name>
        <dbReference type="ChEBI" id="CHEBI:59789"/>
    </ligand>
</feature>
<feature type="binding site" evidence="1">
    <location>
        <position position="85"/>
    </location>
    <ligand>
        <name>S-adenosyl-L-methionine</name>
        <dbReference type="ChEBI" id="CHEBI:59789"/>
    </ligand>
</feature>
<feature type="binding site" evidence="1">
    <location>
        <position position="105"/>
    </location>
    <ligand>
        <name>S-adenosyl-L-methionine</name>
        <dbReference type="ChEBI" id="CHEBI:59789"/>
    </ligand>
</feature>
<accession>Q8A0H8</accession>
<protein>
    <recommendedName>
        <fullName evidence="1">Ribosomal RNA small subunit methyltransferase A</fullName>
        <ecNumber evidence="1">2.1.1.182</ecNumber>
    </recommendedName>
    <alternativeName>
        <fullName evidence="1">16S rRNA (adenine(1518)-N(6)/adenine(1519)-N(6))-dimethyltransferase</fullName>
    </alternativeName>
    <alternativeName>
        <fullName evidence="1">16S rRNA dimethyladenosine transferase</fullName>
    </alternativeName>
    <alternativeName>
        <fullName evidence="1">16S rRNA dimethylase</fullName>
    </alternativeName>
    <alternativeName>
        <fullName evidence="1">S-adenosylmethionine-6-N', N'-adenosyl(rRNA) dimethyltransferase</fullName>
    </alternativeName>
</protein>
<name>RSMA_BACTN</name>